<evidence type="ECO:0000250" key="1">
    <source>
        <dbReference type="UniProtKB" id="Q99LC5"/>
    </source>
</evidence>
<evidence type="ECO:0000255" key="2"/>
<evidence type="ECO:0000269" key="3">
    <source>
    </source>
</evidence>
<evidence type="ECO:0000269" key="4">
    <source>
    </source>
</evidence>
<evidence type="ECO:0000269" key="5">
    <source>
    </source>
</evidence>
<evidence type="ECO:0000269" key="6">
    <source>
    </source>
</evidence>
<evidence type="ECO:0000269" key="7">
    <source>
    </source>
</evidence>
<evidence type="ECO:0000269" key="8">
    <source>
    </source>
</evidence>
<evidence type="ECO:0000269" key="9">
    <source>
    </source>
</evidence>
<evidence type="ECO:0000269" key="10">
    <source>
    </source>
</evidence>
<evidence type="ECO:0000269" key="11">
    <source>
    </source>
</evidence>
<evidence type="ECO:0000303" key="12">
    <source>
    </source>
</evidence>
<evidence type="ECO:0000303" key="13">
    <source>
    </source>
</evidence>
<evidence type="ECO:0000305" key="14"/>
<evidence type="ECO:0000305" key="15">
    <source>
    </source>
</evidence>
<evidence type="ECO:0007744" key="16">
    <source>
        <dbReference type="PDB" id="1EFV"/>
    </source>
</evidence>
<evidence type="ECO:0007744" key="17">
    <source>
        <dbReference type="PDB" id="2A1T"/>
    </source>
</evidence>
<evidence type="ECO:0007744" key="18">
    <source>
    </source>
</evidence>
<evidence type="ECO:0007744" key="19">
    <source>
    </source>
</evidence>
<evidence type="ECO:0007829" key="20">
    <source>
        <dbReference type="PDB" id="1EFV"/>
    </source>
</evidence>
<evidence type="ECO:0007829" key="21">
    <source>
        <dbReference type="PDB" id="2A1U"/>
    </source>
</evidence>
<sequence length="333" mass="35080">MFRAAAPGQLRRAASLLRFQSTLVIAEHANDSLAPITLNTITAATRLGGEVSCLVAGTKCDKVAQDLCKVAGIAKVLVAQHDVYKGLLPEELTPLILATQKQFNYTHICAGASAFGKNLLPRVAAKLEVAPISDIIAIKSPDTFVRTIYAGNALCTVKCDEKVKVFSVRGTSFDAAATSGGSASSEKASSTSPVEISEWLDQKLTKSDRPELTGAKVVVSGGRGLKSGENFKLLYDLADQLHAAVGASRAAVDAGFVPNDMQVGQTGKIVAPELYIAVGISGAIQHLAGMKDSKTIVAINKDPEAPIFQVADYGIVADLFKVVPEMTEILKKK</sequence>
<comment type="function">
    <text evidence="3 4 5 6 7 9 11 13 15">Heterodimeric electron transfer flavoprotein that accepts electrons from several mitochondrial dehydrogenases, including acyl-CoA dehydrogenases, glutaryl-CoA and sarcosine dehydrogenase (PubMed:10356313, PubMed:15159392, PubMed:15975918, PubMed:27499296, PubMed:9334218). It transfers the electrons to the main mitochondrial respiratory chain via ETF-ubiquinone oxidoreductase (ETF dehydrogenase) (PubMed:9334218). Required for normal mitochondrial fatty acid oxidation and normal amino acid metabolism (PubMed:12815589, PubMed:1430199, PubMed:1882842).</text>
</comment>
<comment type="cofactor">
    <cofactor evidence="7 10 11">
        <name>FAD</name>
        <dbReference type="ChEBI" id="CHEBI:57692"/>
    </cofactor>
    <text evidence="7 10">Binds 1 FAD per dimer.</text>
</comment>
<comment type="subunit">
    <text evidence="1 6 7 9 10">Heterodimer composed of ETFA and ETFB (PubMed:15159392, PubMed:15975918, PubMed:8962055, PubMed:9334218). Identified in a complex that contains ETFA, ETFB and ETFRF1 (PubMed:27499296). Interaction with ETFRF1 promotes dissociation of the bound FAD and loss of electron transfer activity (PubMed:27499296). Interacts with TASOR (By similarity).</text>
</comment>
<comment type="interaction">
    <interactant intactId="EBI-1052886">
        <id>P13804</id>
    </interactant>
    <interactant intactId="EBI-349854">
        <id>P13569</id>
        <label>CFTR</label>
    </interactant>
    <organismsDiffer>false</organismsDiffer>
    <experiments>7</experiments>
</comment>
<comment type="interaction">
    <interactant intactId="EBI-1052886">
        <id>P13804</id>
    </interactant>
    <interactant intactId="EBI-1056543">
        <id>P38117</id>
        <label>ETFB</label>
    </interactant>
    <organismsDiffer>false</organismsDiffer>
    <experiments>4</experiments>
</comment>
<comment type="interaction">
    <interactant intactId="EBI-1052886">
        <id>P13804</id>
    </interactant>
    <interactant intactId="EBI-1805738">
        <id>Q8IWL3</id>
        <label>HSCB</label>
    </interactant>
    <organismsDiffer>false</organismsDiffer>
    <experiments>3</experiments>
</comment>
<comment type="subcellular location">
    <subcellularLocation>
        <location evidence="14">Mitochondrion matrix</location>
    </subcellularLocation>
</comment>
<comment type="alternative products">
    <event type="alternative splicing"/>
    <isoform>
        <id>P13804-1</id>
        <name>1</name>
        <sequence type="displayed"/>
    </isoform>
    <isoform>
        <id>P13804-2</id>
        <name>2</name>
        <sequence type="described" ref="VSP_043246"/>
    </isoform>
</comment>
<comment type="domain">
    <text evidence="10">Domain I shares an identical polypeptide fold with the beta subunit ETFB though there is no sequence similarity.</text>
</comment>
<comment type="PTM">
    <text>The N-terminus is blocked.</text>
</comment>
<comment type="disease" evidence="4 5 8 11">
    <disease id="DI-00513">
        <name>Glutaric aciduria 2A</name>
        <acronym>GA2A</acronym>
        <description>An autosomal recessively inherited disorder of fatty acid, amino acid, and choline metabolism. It is characterized by multiple acyl-CoA dehydrogenase deficiencies resulting in large excretion not only of glutaric acid, but also of lactic, ethylmalonic, butyric, isobutyric, 2-methyl-butyric, and isovaleric acids.</description>
        <dbReference type="MIM" id="231680"/>
    </disease>
    <text>The disease is caused by variants affecting the gene represented in this entry.</text>
</comment>
<comment type="similarity">
    <text evidence="14">Belongs to the ETF alpha-subunit/FixB family.</text>
</comment>
<organism>
    <name type="scientific">Homo sapiens</name>
    <name type="common">Human</name>
    <dbReference type="NCBI Taxonomy" id="9606"/>
    <lineage>
        <taxon>Eukaryota</taxon>
        <taxon>Metazoa</taxon>
        <taxon>Chordata</taxon>
        <taxon>Craniata</taxon>
        <taxon>Vertebrata</taxon>
        <taxon>Euteleostomi</taxon>
        <taxon>Mammalia</taxon>
        <taxon>Eutheria</taxon>
        <taxon>Euarchontoglires</taxon>
        <taxon>Primates</taxon>
        <taxon>Haplorrhini</taxon>
        <taxon>Catarrhini</taxon>
        <taxon>Hominidae</taxon>
        <taxon>Homo</taxon>
    </lineage>
</organism>
<name>ETFA_HUMAN</name>
<reference key="1">
    <citation type="journal article" date="1988" name="J. Biol. Chem.">
        <title>Molecular cloning and nucleotide sequence of cDNAs encoding the alpha-subunit of human electron transfer flavoprotein.</title>
        <authorList>
            <person name="Finocchiaro G."/>
            <person name="Ito M."/>
            <person name="Ikeda Y."/>
            <person name="Tanaka K."/>
        </authorList>
    </citation>
    <scope>NUCLEOTIDE SEQUENCE [MRNA] (ISOFORM 1)</scope>
</reference>
<reference key="2">
    <citation type="journal article" date="2003" name="Hum. Mutat.">
        <title>Clear relationship between ETF/ETFDH genotype and phenotype in patients with multiple acyl-CoA dehydrogenation deficiency.</title>
        <authorList>
            <person name="Olsen R.K.J."/>
            <person name="Andresen B.S."/>
            <person name="Christensen E."/>
            <person name="Bross P."/>
            <person name="Skovby F."/>
            <person name="Gregersen N."/>
        </authorList>
    </citation>
    <scope>NUCLEOTIDE SEQUENCE [GENOMIC DNA]</scope>
    <scope>ALTERNATIVE SPLICING</scope>
    <scope>FUNCTION</scope>
    <scope>VARIANT GA2A MET-266</scope>
</reference>
<reference key="3">
    <citation type="submission" date="2003-08" db="EMBL/GenBank/DDBJ databases">
        <title>Cloning of human full-length CDSs in BD Creator(TM) system donor vector.</title>
        <authorList>
            <person name="Kalnine N."/>
            <person name="Chen X."/>
            <person name="Rolfs A."/>
            <person name="Halleck A."/>
            <person name="Hines L."/>
            <person name="Eisenstein S."/>
            <person name="Koundinya M."/>
            <person name="Raphael J."/>
            <person name="Moreira D."/>
            <person name="Kelley T."/>
            <person name="LaBaer J."/>
            <person name="Lin Y."/>
            <person name="Phelan M."/>
            <person name="Farmer A."/>
        </authorList>
    </citation>
    <scope>NUCLEOTIDE SEQUENCE [LARGE SCALE MRNA] (ISOFORM 1)</scope>
</reference>
<reference key="4">
    <citation type="journal article" date="2004" name="Nat. Genet.">
        <title>Complete sequencing and characterization of 21,243 full-length human cDNAs.</title>
        <authorList>
            <person name="Ota T."/>
            <person name="Suzuki Y."/>
            <person name="Nishikawa T."/>
            <person name="Otsuki T."/>
            <person name="Sugiyama T."/>
            <person name="Irie R."/>
            <person name="Wakamatsu A."/>
            <person name="Hayashi K."/>
            <person name="Sato H."/>
            <person name="Nagai K."/>
            <person name="Kimura K."/>
            <person name="Makita H."/>
            <person name="Sekine M."/>
            <person name="Obayashi M."/>
            <person name="Nishi T."/>
            <person name="Shibahara T."/>
            <person name="Tanaka T."/>
            <person name="Ishii S."/>
            <person name="Yamamoto J."/>
            <person name="Saito K."/>
            <person name="Kawai Y."/>
            <person name="Isono Y."/>
            <person name="Nakamura Y."/>
            <person name="Nagahari K."/>
            <person name="Murakami K."/>
            <person name="Yasuda T."/>
            <person name="Iwayanagi T."/>
            <person name="Wagatsuma M."/>
            <person name="Shiratori A."/>
            <person name="Sudo H."/>
            <person name="Hosoiri T."/>
            <person name="Kaku Y."/>
            <person name="Kodaira H."/>
            <person name="Kondo H."/>
            <person name="Sugawara M."/>
            <person name="Takahashi M."/>
            <person name="Kanda K."/>
            <person name="Yokoi T."/>
            <person name="Furuya T."/>
            <person name="Kikkawa E."/>
            <person name="Omura Y."/>
            <person name="Abe K."/>
            <person name="Kamihara K."/>
            <person name="Katsuta N."/>
            <person name="Sato K."/>
            <person name="Tanikawa M."/>
            <person name="Yamazaki M."/>
            <person name="Ninomiya K."/>
            <person name="Ishibashi T."/>
            <person name="Yamashita H."/>
            <person name="Murakawa K."/>
            <person name="Fujimori K."/>
            <person name="Tanai H."/>
            <person name="Kimata M."/>
            <person name="Watanabe M."/>
            <person name="Hiraoka S."/>
            <person name="Chiba Y."/>
            <person name="Ishida S."/>
            <person name="Ono Y."/>
            <person name="Takiguchi S."/>
            <person name="Watanabe S."/>
            <person name="Yosida M."/>
            <person name="Hotuta T."/>
            <person name="Kusano J."/>
            <person name="Kanehori K."/>
            <person name="Takahashi-Fujii A."/>
            <person name="Hara H."/>
            <person name="Tanase T.-O."/>
            <person name="Nomura Y."/>
            <person name="Togiya S."/>
            <person name="Komai F."/>
            <person name="Hara R."/>
            <person name="Takeuchi K."/>
            <person name="Arita M."/>
            <person name="Imose N."/>
            <person name="Musashino K."/>
            <person name="Yuuki H."/>
            <person name="Oshima A."/>
            <person name="Sasaki N."/>
            <person name="Aotsuka S."/>
            <person name="Yoshikawa Y."/>
            <person name="Matsunawa H."/>
            <person name="Ichihara T."/>
            <person name="Shiohata N."/>
            <person name="Sano S."/>
            <person name="Moriya S."/>
            <person name="Momiyama H."/>
            <person name="Satoh N."/>
            <person name="Takami S."/>
            <person name="Terashima Y."/>
            <person name="Suzuki O."/>
            <person name="Nakagawa S."/>
            <person name="Senoh A."/>
            <person name="Mizoguchi H."/>
            <person name="Goto Y."/>
            <person name="Shimizu F."/>
            <person name="Wakebe H."/>
            <person name="Hishigaki H."/>
            <person name="Watanabe T."/>
            <person name="Sugiyama A."/>
            <person name="Takemoto M."/>
            <person name="Kawakami B."/>
            <person name="Yamazaki M."/>
            <person name="Watanabe K."/>
            <person name="Kumagai A."/>
            <person name="Itakura S."/>
            <person name="Fukuzumi Y."/>
            <person name="Fujimori Y."/>
            <person name="Komiyama M."/>
            <person name="Tashiro H."/>
            <person name="Tanigami A."/>
            <person name="Fujiwara T."/>
            <person name="Ono T."/>
            <person name="Yamada K."/>
            <person name="Fujii Y."/>
            <person name="Ozaki K."/>
            <person name="Hirao M."/>
            <person name="Ohmori Y."/>
            <person name="Kawabata A."/>
            <person name="Hikiji T."/>
            <person name="Kobatake N."/>
            <person name="Inagaki H."/>
            <person name="Ikema Y."/>
            <person name="Okamoto S."/>
            <person name="Okitani R."/>
            <person name="Kawakami T."/>
            <person name="Noguchi S."/>
            <person name="Itoh T."/>
            <person name="Shigeta K."/>
            <person name="Senba T."/>
            <person name="Matsumura K."/>
            <person name="Nakajima Y."/>
            <person name="Mizuno T."/>
            <person name="Morinaga M."/>
            <person name="Sasaki M."/>
            <person name="Togashi T."/>
            <person name="Oyama M."/>
            <person name="Hata H."/>
            <person name="Watanabe M."/>
            <person name="Komatsu T."/>
            <person name="Mizushima-Sugano J."/>
            <person name="Satoh T."/>
            <person name="Shirai Y."/>
            <person name="Takahashi Y."/>
            <person name="Nakagawa K."/>
            <person name="Okumura K."/>
            <person name="Nagase T."/>
            <person name="Nomura N."/>
            <person name="Kikuchi H."/>
            <person name="Masuho Y."/>
            <person name="Yamashita R."/>
            <person name="Nakai K."/>
            <person name="Yada T."/>
            <person name="Nakamura Y."/>
            <person name="Ohara O."/>
            <person name="Isogai T."/>
            <person name="Sugano S."/>
        </authorList>
    </citation>
    <scope>NUCLEOTIDE SEQUENCE [LARGE SCALE MRNA] (ISOFORMS 1 AND 2)</scope>
    <source>
        <tissue>Trachea</tissue>
    </source>
</reference>
<reference key="5">
    <citation type="journal article" date="2006" name="Nature">
        <title>Analysis of the DNA sequence and duplication history of human chromosome 15.</title>
        <authorList>
            <person name="Zody M.C."/>
            <person name="Garber M."/>
            <person name="Sharpe T."/>
            <person name="Young S.K."/>
            <person name="Rowen L."/>
            <person name="O'Neill K."/>
            <person name="Whittaker C.A."/>
            <person name="Kamal M."/>
            <person name="Chang J.L."/>
            <person name="Cuomo C.A."/>
            <person name="Dewar K."/>
            <person name="FitzGerald M.G."/>
            <person name="Kodira C.D."/>
            <person name="Madan A."/>
            <person name="Qin S."/>
            <person name="Yang X."/>
            <person name="Abbasi N."/>
            <person name="Abouelleil A."/>
            <person name="Arachchi H.M."/>
            <person name="Baradarani L."/>
            <person name="Birditt B."/>
            <person name="Bloom S."/>
            <person name="Bloom T."/>
            <person name="Borowsky M.L."/>
            <person name="Burke J."/>
            <person name="Butler J."/>
            <person name="Cook A."/>
            <person name="DeArellano K."/>
            <person name="DeCaprio D."/>
            <person name="Dorris L. III"/>
            <person name="Dors M."/>
            <person name="Eichler E.E."/>
            <person name="Engels R."/>
            <person name="Fahey J."/>
            <person name="Fleetwood P."/>
            <person name="Friedman C."/>
            <person name="Gearin G."/>
            <person name="Hall J.L."/>
            <person name="Hensley G."/>
            <person name="Johnson E."/>
            <person name="Jones C."/>
            <person name="Kamat A."/>
            <person name="Kaur A."/>
            <person name="Locke D.P."/>
            <person name="Madan A."/>
            <person name="Munson G."/>
            <person name="Jaffe D.B."/>
            <person name="Lui A."/>
            <person name="Macdonald P."/>
            <person name="Mauceli E."/>
            <person name="Naylor J.W."/>
            <person name="Nesbitt R."/>
            <person name="Nicol R."/>
            <person name="O'Leary S.B."/>
            <person name="Ratcliffe A."/>
            <person name="Rounsley S."/>
            <person name="She X."/>
            <person name="Sneddon K.M.B."/>
            <person name="Stewart S."/>
            <person name="Sougnez C."/>
            <person name="Stone S.M."/>
            <person name="Topham K."/>
            <person name="Vincent D."/>
            <person name="Wang S."/>
            <person name="Zimmer A.R."/>
            <person name="Birren B.W."/>
            <person name="Hood L."/>
            <person name="Lander E.S."/>
            <person name="Nusbaum C."/>
        </authorList>
    </citation>
    <scope>NUCLEOTIDE SEQUENCE [LARGE SCALE GENOMIC DNA]</scope>
</reference>
<reference key="6">
    <citation type="submission" date="2005-09" db="EMBL/GenBank/DDBJ databases">
        <authorList>
            <person name="Mural R.J."/>
            <person name="Istrail S."/>
            <person name="Sutton G."/>
            <person name="Florea L."/>
            <person name="Halpern A.L."/>
            <person name="Mobarry C.M."/>
            <person name="Lippert R."/>
            <person name="Walenz B."/>
            <person name="Shatkay H."/>
            <person name="Dew I."/>
            <person name="Miller J.R."/>
            <person name="Flanigan M.J."/>
            <person name="Edwards N.J."/>
            <person name="Bolanos R."/>
            <person name="Fasulo D."/>
            <person name="Halldorsson B.V."/>
            <person name="Hannenhalli S."/>
            <person name="Turner R."/>
            <person name="Yooseph S."/>
            <person name="Lu F."/>
            <person name="Nusskern D.R."/>
            <person name="Shue B.C."/>
            <person name="Zheng X.H."/>
            <person name="Zhong F."/>
            <person name="Delcher A.L."/>
            <person name="Huson D.H."/>
            <person name="Kravitz S.A."/>
            <person name="Mouchard L."/>
            <person name="Reinert K."/>
            <person name="Remington K.A."/>
            <person name="Clark A.G."/>
            <person name="Waterman M.S."/>
            <person name="Eichler E.E."/>
            <person name="Adams M.D."/>
            <person name="Hunkapiller M.W."/>
            <person name="Myers E.W."/>
            <person name="Venter J.C."/>
        </authorList>
    </citation>
    <scope>NUCLEOTIDE SEQUENCE [LARGE SCALE GENOMIC DNA]</scope>
</reference>
<reference key="7">
    <citation type="journal article" date="2004" name="Genome Res.">
        <title>The status, quality, and expansion of the NIH full-length cDNA project: the Mammalian Gene Collection (MGC).</title>
        <authorList>
            <consortium name="The MGC Project Team"/>
        </authorList>
    </citation>
    <scope>NUCLEOTIDE SEQUENCE [LARGE SCALE MRNA] (ISOFORM 1)</scope>
    <source>
        <tissue>Chondrosarcoma</tissue>
        <tissue>Colon</tissue>
    </source>
</reference>
<reference key="8">
    <citation type="submission" date="2008-12" db="UniProtKB">
        <authorList>
            <person name="Lubec G."/>
            <person name="Chen W.-Q."/>
            <person name="Sun Y."/>
        </authorList>
    </citation>
    <scope>PROTEIN SEQUENCE OF 86-101 AND 170-203</scope>
    <scope>IDENTIFICATION BY MASS SPECTROMETRY</scope>
    <source>
        <tissue>Fetal brain cortex</tissue>
    </source>
</reference>
<reference key="9">
    <citation type="journal article" date="2007" name="FEBS J.">
        <title>Dynamics driving function: new insights from electron transferring flavoproteins and partner complexes.</title>
        <authorList>
            <person name="Toogood H.S."/>
            <person name="Leys D."/>
            <person name="Scrutton N.S."/>
        </authorList>
    </citation>
    <scope>REVIEW</scope>
</reference>
<reference key="10">
    <citation type="journal article" date="2011" name="BMC Syst. Biol.">
        <title>Initial characterization of the human central proteome.</title>
        <authorList>
            <person name="Burkard T.R."/>
            <person name="Planyavsky M."/>
            <person name="Kaupe I."/>
            <person name="Breitwieser F.P."/>
            <person name="Buerckstuemmer T."/>
            <person name="Bennett K.L."/>
            <person name="Superti-Furga G."/>
            <person name="Colinge J."/>
        </authorList>
    </citation>
    <scope>IDENTIFICATION BY MASS SPECTROMETRY [LARGE SCALE ANALYSIS]</scope>
</reference>
<reference key="11">
    <citation type="journal article" date="2013" name="J. Proteome Res.">
        <title>Toward a comprehensive characterization of a human cancer cell phosphoproteome.</title>
        <authorList>
            <person name="Zhou H."/>
            <person name="Di Palma S."/>
            <person name="Preisinger C."/>
            <person name="Peng M."/>
            <person name="Polat A.N."/>
            <person name="Heck A.J."/>
            <person name="Mohammed S."/>
        </authorList>
    </citation>
    <scope>IDENTIFICATION BY MASS SPECTROMETRY [LARGE SCALE ANALYSIS]</scope>
    <source>
        <tissue>Cervix carcinoma</tissue>
        <tissue>Erythroleukemia</tissue>
    </source>
</reference>
<reference key="12">
    <citation type="journal article" date="2014" name="J. Proteomics">
        <title>An enzyme assisted RP-RPLC approach for in-depth analysis of human liver phosphoproteome.</title>
        <authorList>
            <person name="Bian Y."/>
            <person name="Song C."/>
            <person name="Cheng K."/>
            <person name="Dong M."/>
            <person name="Wang F."/>
            <person name="Huang J."/>
            <person name="Sun D."/>
            <person name="Wang L."/>
            <person name="Ye M."/>
            <person name="Zou H."/>
        </authorList>
    </citation>
    <scope>PHOSPHORYLATION [LARGE SCALE ANALYSIS] AT SER-140</scope>
    <scope>IDENTIFICATION BY MASS SPECTROMETRY [LARGE SCALE ANALYSIS]</scope>
    <source>
        <tissue>Liver</tissue>
    </source>
</reference>
<reference key="13">
    <citation type="journal article" date="2015" name="Proteomics">
        <title>N-terminome analysis of the human mitochondrial proteome.</title>
        <authorList>
            <person name="Vaca Jacome A.S."/>
            <person name="Rabilloud T."/>
            <person name="Schaeffer-Reiss C."/>
            <person name="Rompais M."/>
            <person name="Ayoub D."/>
            <person name="Lane L."/>
            <person name="Bairoch A."/>
            <person name="Van Dorsselaer A."/>
            <person name="Carapito C."/>
        </authorList>
    </citation>
    <scope>CLEAVAGE OF TRANSIT PEPTIDE [LARGE SCALE ANALYSIS] AFTER PHE-19</scope>
    <scope>IDENTIFICATION BY MASS SPECTROMETRY [LARGE SCALE ANALYSIS]</scope>
</reference>
<reference key="14">
    <citation type="journal article" date="2016" name="Mol. Cell">
        <title>Mitochondrial protein interaction mapping identifies regulators of respiratory chain function.</title>
        <authorList>
            <person name="Floyd B.J."/>
            <person name="Wilkerson E.M."/>
            <person name="Veling M.T."/>
            <person name="Minogue C.E."/>
            <person name="Xia C."/>
            <person name="Beebe E.T."/>
            <person name="Wrobel R.L."/>
            <person name="Cho H."/>
            <person name="Kremer L.S."/>
            <person name="Alston C.L."/>
            <person name="Gromek K.A."/>
            <person name="Dolan B.K."/>
            <person name="Ulbrich A."/>
            <person name="Stefely J.A."/>
            <person name="Bohl S.L."/>
            <person name="Werner K.M."/>
            <person name="Jochem A."/>
            <person name="Westphall M.S."/>
            <person name="Rensvold J.W."/>
            <person name="Taylor R.W."/>
            <person name="Prokisch H."/>
            <person name="Kim J.J."/>
            <person name="Coon J.J."/>
            <person name="Pagliarini D.J."/>
        </authorList>
    </citation>
    <scope>FUNCTION</scope>
    <scope>INTERACTION WITH ETFRF1</scope>
    <scope>IDENTIFICATION IN A COMPLEX WITH ETFB AND ETFRF1</scope>
</reference>
<reference key="15">
    <citation type="journal article" date="1996" name="Proc. Natl. Acad. Sci. U.S.A.">
        <title>Three-dimensional structure of human electron transfer flavoprotein to 2.1-A resolution.</title>
        <authorList>
            <person name="Roberts D.L."/>
            <person name="Frerman F.E."/>
            <person name="Kim J.-J.P."/>
        </authorList>
    </citation>
    <scope>X-RAY CRYSTALLOGRAPHY (2.1 ANGSTROMS) OF 20-333 IN COMPLEX WITH FAD AND ETFB</scope>
    <scope>SUBUNIT</scope>
    <scope>COFACTOR</scope>
    <scope>DOMAIN</scope>
</reference>
<reference key="16">
    <citation type="journal article" date="2004" name="J. Biol. Chem.">
        <title>Extensive domain motion and electron transfer in the human electron transferring flavoprotein.medium chain acyl-CoA dehydrogenase complex.</title>
        <authorList>
            <person name="Toogood H.S."/>
            <person name="van Thiel A."/>
            <person name="Basran J."/>
            <person name="Sutcliffe M.J."/>
            <person name="Scrutton N.S."/>
            <person name="Leys D."/>
        </authorList>
    </citation>
    <scope>X-RAY CRYSTALLOGRAPHY (2.9 ANGSTROMS) IN COMPLEX WITH ETFB AND ACADM</scope>
    <scope>FUNCTION</scope>
    <scope>SUBUNIT</scope>
</reference>
<reference key="17">
    <citation type="journal article" date="2005" name="J. Biol. Chem.">
        <title>Stabilization of non-productive conformations underpins rapid electron transfer to electron-transferring flavoprotein.</title>
        <authorList>
            <person name="Toogood H.S."/>
            <person name="van Thiel A."/>
            <person name="Scrutton N.S."/>
            <person name="Leys D."/>
        </authorList>
    </citation>
    <scope>X-RAY CRYSTALLOGRAPHY (2.11 ANGSTROMS) IN COMPLEX WITH FAD; ETFB AND ACADM</scope>
    <scope>FUNCTION</scope>
    <scope>COFACTOR</scope>
    <scope>MUTAGENESIS OF ARG-249</scope>
</reference>
<reference key="18">
    <citation type="journal article" date="1991" name="Am. J. Hum. Genet.">
        <title>Molecular characterization of variant alpha-subunit of electron transfer flavoprotein in three patients with glutaric acidemia type II -- and identification of glycine substitution for valine-157 in the sequence of the precursor, producing an unstable mature protein in a patient.</title>
        <authorList>
            <person name="Indo Y."/>
            <person name="Glassberg R."/>
            <person name="Yokota I."/>
            <person name="Tanaka K."/>
        </authorList>
    </citation>
    <scope>VARIANT GA2A GLY-157</scope>
    <scope>FUNCTION</scope>
</reference>
<reference key="19">
    <citation type="journal article" date="1992" name="J. Clin. Invest.">
        <title>Glutaric acidemia type II. Heterogeneity in beta-oxidation flux, polypeptide synthesis, and complementary DNA mutations in the alpha subunit of electron transfer flavoprotein in eight patients.</title>
        <authorList>
            <person name="Freneaux E."/>
            <person name="Sheffield V.C."/>
            <person name="Molin L."/>
            <person name="Shires A."/>
            <person name="Rhead W."/>
        </authorList>
    </citation>
    <scope>VARIANTS GA2A ARG-116 AND MET-266</scope>
    <scope>FUNCTION</scope>
    <scope>CHARACTERIZATION OF VARIANT GA2A MET-266</scope>
</reference>
<reference key="20">
    <citation type="journal article" date="1997" name="J. Biol. Chem.">
        <title>Expression and characterization of two pathogenic mutations in human electron transfer flavoprotein.</title>
        <authorList>
            <person name="Salazar D."/>
            <person name="Zhang L."/>
            <person name="deGala G.D."/>
            <person name="Frerman F.E."/>
        </authorList>
    </citation>
    <scope>CHARACTERIZATION OF VARIANTS GA2A ARG-116 AND MET-266</scope>
    <scope>FUNCTION</scope>
    <scope>COFACTOR</scope>
    <scope>SUBUNIT</scope>
</reference>
<reference key="21">
    <citation type="journal article" date="1999" name="Mol. Genet. Metab.">
        <title>A polymorphic variant in the human electron transfer flavoprotein alpha-chain (alpha-T171) displays decreased thermal stability and is overrepresented in very-long-chain acyl-CoA dehydrogenase-deficient patients with mild childhood presentation.</title>
        <authorList>
            <person name="Bross P."/>
            <person name="Pedersen P."/>
            <person name="Winter V."/>
            <person name="Nyholm M."/>
            <person name="Johansen B.N."/>
            <person name="Olsen R.K."/>
            <person name="Corydon M.J."/>
            <person name="Andresen B.S."/>
            <person name="Eiberg H."/>
            <person name="Kolvraa S."/>
            <person name="Gregersen N."/>
        </authorList>
    </citation>
    <scope>VARIANT ILE-171</scope>
    <scope>CHARACTERIZATION OF VARIANT ILE-171</scope>
    <scope>FUNCTION</scope>
</reference>
<dbReference type="EMBL" id="J04058">
    <property type="protein sequence ID" value="AAA52406.1"/>
    <property type="molecule type" value="mRNA"/>
</dbReference>
<dbReference type="EMBL" id="S55815">
    <property type="status" value="NOT_ANNOTATED_CDS"/>
    <property type="molecule type" value="mRNA"/>
</dbReference>
<dbReference type="EMBL" id="S55816">
    <property type="status" value="NOT_ANNOTATED_CDS"/>
    <property type="molecule type" value="mRNA"/>
</dbReference>
<dbReference type="EMBL" id="AJ224002">
    <property type="protein sequence ID" value="CAA11802.1"/>
    <property type="molecule type" value="Genomic_DNA"/>
</dbReference>
<dbReference type="EMBL" id="AF436657">
    <property type="protein sequence ID" value="AAN03712.1"/>
    <property type="molecule type" value="Genomic_DNA"/>
</dbReference>
<dbReference type="EMBL" id="AF436646">
    <property type="protein sequence ID" value="AAN03712.1"/>
    <property type="status" value="JOINED"/>
    <property type="molecule type" value="Genomic_DNA"/>
</dbReference>
<dbReference type="EMBL" id="AF436647">
    <property type="protein sequence ID" value="AAN03712.1"/>
    <property type="status" value="JOINED"/>
    <property type="molecule type" value="Genomic_DNA"/>
</dbReference>
<dbReference type="EMBL" id="AF436648">
    <property type="protein sequence ID" value="AAN03712.1"/>
    <property type="status" value="JOINED"/>
    <property type="molecule type" value="Genomic_DNA"/>
</dbReference>
<dbReference type="EMBL" id="AF436649">
    <property type="protein sequence ID" value="AAN03712.1"/>
    <property type="status" value="JOINED"/>
    <property type="molecule type" value="Genomic_DNA"/>
</dbReference>
<dbReference type="EMBL" id="AF436650">
    <property type="protein sequence ID" value="AAN03712.1"/>
    <property type="status" value="JOINED"/>
    <property type="molecule type" value="Genomic_DNA"/>
</dbReference>
<dbReference type="EMBL" id="AF436651">
    <property type="protein sequence ID" value="AAN03712.1"/>
    <property type="status" value="JOINED"/>
    <property type="molecule type" value="Genomic_DNA"/>
</dbReference>
<dbReference type="EMBL" id="AF436652">
    <property type="protein sequence ID" value="AAN03712.1"/>
    <property type="status" value="JOINED"/>
    <property type="molecule type" value="Genomic_DNA"/>
</dbReference>
<dbReference type="EMBL" id="AF436653">
    <property type="protein sequence ID" value="AAN03712.1"/>
    <property type="status" value="JOINED"/>
    <property type="molecule type" value="Genomic_DNA"/>
</dbReference>
<dbReference type="EMBL" id="AF436654">
    <property type="protein sequence ID" value="AAN03712.1"/>
    <property type="status" value="JOINED"/>
    <property type="molecule type" value="Genomic_DNA"/>
</dbReference>
<dbReference type="EMBL" id="AF436655">
    <property type="protein sequence ID" value="AAN03712.1"/>
    <property type="status" value="JOINED"/>
    <property type="molecule type" value="Genomic_DNA"/>
</dbReference>
<dbReference type="EMBL" id="AF436656">
    <property type="protein sequence ID" value="AAN03712.1"/>
    <property type="status" value="JOINED"/>
    <property type="molecule type" value="Genomic_DNA"/>
</dbReference>
<dbReference type="EMBL" id="BT009796">
    <property type="protein sequence ID" value="AAP88798.1"/>
    <property type="molecule type" value="mRNA"/>
</dbReference>
<dbReference type="EMBL" id="AK292979">
    <property type="protein sequence ID" value="BAF85668.1"/>
    <property type="molecule type" value="mRNA"/>
</dbReference>
<dbReference type="EMBL" id="AK300044">
    <property type="protein sequence ID" value="BAG61855.1"/>
    <property type="molecule type" value="mRNA"/>
</dbReference>
<dbReference type="EMBL" id="AC027243">
    <property type="status" value="NOT_ANNOTATED_CDS"/>
    <property type="molecule type" value="Genomic_DNA"/>
</dbReference>
<dbReference type="EMBL" id="AC091100">
    <property type="status" value="NOT_ANNOTATED_CDS"/>
    <property type="molecule type" value="Genomic_DNA"/>
</dbReference>
<dbReference type="EMBL" id="CH471136">
    <property type="protein sequence ID" value="EAW99221.1"/>
    <property type="molecule type" value="Genomic_DNA"/>
</dbReference>
<dbReference type="EMBL" id="BC015526">
    <property type="protein sequence ID" value="AAH15526.1"/>
    <property type="molecule type" value="mRNA"/>
</dbReference>
<dbReference type="EMBL" id="BC095457">
    <property type="protein sequence ID" value="AAH95457.1"/>
    <property type="molecule type" value="mRNA"/>
</dbReference>
<dbReference type="CCDS" id="CCDS32299.1">
    <molecule id="P13804-1"/>
</dbReference>
<dbReference type="CCDS" id="CCDS45311.1">
    <molecule id="P13804-2"/>
</dbReference>
<dbReference type="PIR" id="A31998">
    <property type="entry name" value="A31998"/>
</dbReference>
<dbReference type="RefSeq" id="NP_000117.1">
    <molecule id="P13804-1"/>
    <property type="nucleotide sequence ID" value="NM_000126.4"/>
</dbReference>
<dbReference type="RefSeq" id="NP_001121188.1">
    <molecule id="P13804-2"/>
    <property type="nucleotide sequence ID" value="NM_001127716.2"/>
</dbReference>
<dbReference type="PDB" id="1EFV">
    <property type="method" value="X-ray"/>
    <property type="resolution" value="2.10 A"/>
    <property type="chains" value="A=20-333"/>
</dbReference>
<dbReference type="PDB" id="1T9G">
    <property type="method" value="X-ray"/>
    <property type="resolution" value="2.90 A"/>
    <property type="chains" value="R=1-333"/>
</dbReference>
<dbReference type="PDB" id="2A1T">
    <property type="method" value="X-ray"/>
    <property type="resolution" value="2.80 A"/>
    <property type="chains" value="R=1-333"/>
</dbReference>
<dbReference type="PDB" id="2A1U">
    <property type="method" value="X-ray"/>
    <property type="resolution" value="2.11 A"/>
    <property type="chains" value="A=1-333"/>
</dbReference>
<dbReference type="PDBsum" id="1EFV"/>
<dbReference type="PDBsum" id="1T9G"/>
<dbReference type="PDBsum" id="2A1T"/>
<dbReference type="PDBsum" id="2A1U"/>
<dbReference type="SMR" id="P13804"/>
<dbReference type="BioGRID" id="108409">
    <property type="interactions" value="297"/>
</dbReference>
<dbReference type="ComplexPortal" id="CPX-2731">
    <property type="entry name" value="Mitochondrial electron transfer flavoprotein complex"/>
</dbReference>
<dbReference type="DIP" id="DIP-6161N"/>
<dbReference type="FunCoup" id="P13804">
    <property type="interactions" value="1395"/>
</dbReference>
<dbReference type="IntAct" id="P13804">
    <property type="interactions" value="90"/>
</dbReference>
<dbReference type="MINT" id="P13804"/>
<dbReference type="STRING" id="9606.ENSP00000452762"/>
<dbReference type="CarbonylDB" id="P13804"/>
<dbReference type="GlyGen" id="P13804">
    <property type="glycosylation" value="1 site, 1 O-linked glycan (1 site)"/>
</dbReference>
<dbReference type="iPTMnet" id="P13804"/>
<dbReference type="MetOSite" id="P13804"/>
<dbReference type="PhosphoSitePlus" id="P13804"/>
<dbReference type="SwissPalm" id="P13804"/>
<dbReference type="BioMuta" id="ETFA"/>
<dbReference type="DMDM" id="119636"/>
<dbReference type="CPTAC" id="CPTAC-365"/>
<dbReference type="CPTAC" id="CPTAC-366"/>
<dbReference type="jPOST" id="P13804"/>
<dbReference type="MassIVE" id="P13804"/>
<dbReference type="PaxDb" id="9606-ENSP00000452762"/>
<dbReference type="PeptideAtlas" id="P13804"/>
<dbReference type="ProteomicsDB" id="52989">
    <molecule id="P13804-1"/>
</dbReference>
<dbReference type="ProteomicsDB" id="52990">
    <molecule id="P13804-2"/>
</dbReference>
<dbReference type="Pumba" id="P13804"/>
<dbReference type="TopDownProteomics" id="P13804-1">
    <molecule id="P13804-1"/>
</dbReference>
<dbReference type="TopDownProteomics" id="P13804-2">
    <molecule id="P13804-2"/>
</dbReference>
<dbReference type="Antibodypedia" id="14895">
    <property type="antibodies" value="370 antibodies from 32 providers"/>
</dbReference>
<dbReference type="DNASU" id="2108"/>
<dbReference type="Ensembl" id="ENST00000433983.6">
    <molecule id="P13804-2"/>
    <property type="protein sequence ID" value="ENSP00000399273.2"/>
    <property type="gene ID" value="ENSG00000140374.17"/>
</dbReference>
<dbReference type="Ensembl" id="ENST00000557943.6">
    <molecule id="P13804-1"/>
    <property type="protein sequence ID" value="ENSP00000452762.1"/>
    <property type="gene ID" value="ENSG00000140374.17"/>
</dbReference>
<dbReference type="Ensembl" id="ENST00000690610.1">
    <molecule id="P13804-1"/>
    <property type="protein sequence ID" value="ENSP00000510473.1"/>
    <property type="gene ID" value="ENSG00000140374.17"/>
</dbReference>
<dbReference type="GeneID" id="2108"/>
<dbReference type="KEGG" id="hsa:2108"/>
<dbReference type="MANE-Select" id="ENST00000557943.6">
    <property type="protein sequence ID" value="ENSP00000452762.1"/>
    <property type="RefSeq nucleotide sequence ID" value="NM_000126.4"/>
    <property type="RefSeq protein sequence ID" value="NP_000117.1"/>
</dbReference>
<dbReference type="UCSC" id="uc002bbt.3">
    <molecule id="P13804-1"/>
    <property type="organism name" value="human"/>
</dbReference>
<dbReference type="AGR" id="HGNC:3481"/>
<dbReference type="CTD" id="2108"/>
<dbReference type="DisGeNET" id="2108"/>
<dbReference type="GeneCards" id="ETFA"/>
<dbReference type="GeneReviews" id="ETFA"/>
<dbReference type="HGNC" id="HGNC:3481">
    <property type="gene designation" value="ETFA"/>
</dbReference>
<dbReference type="HPA" id="ENSG00000140374">
    <property type="expression patterns" value="Tissue enhanced (liver, skeletal muscle, tongue)"/>
</dbReference>
<dbReference type="MalaCards" id="ETFA"/>
<dbReference type="MIM" id="231680">
    <property type="type" value="phenotype"/>
</dbReference>
<dbReference type="MIM" id="608053">
    <property type="type" value="gene"/>
</dbReference>
<dbReference type="neXtProt" id="NX_P13804"/>
<dbReference type="OpenTargets" id="ENSG00000140374"/>
<dbReference type="Orphanet" id="394532">
    <property type="disease" value="Multiple acyl-CoA dehydrogenase deficiency, mild type"/>
</dbReference>
<dbReference type="Orphanet" id="394529">
    <property type="disease" value="Multiple acyl-CoA dehydrogenase deficiency, severe neonatal type"/>
</dbReference>
<dbReference type="PharmGKB" id="PA27897"/>
<dbReference type="VEuPathDB" id="HostDB:ENSG00000140374"/>
<dbReference type="eggNOG" id="KOG3954">
    <property type="taxonomic scope" value="Eukaryota"/>
</dbReference>
<dbReference type="GeneTree" id="ENSGT00390000013422"/>
<dbReference type="HOGENOM" id="CLU_034178_0_0_1"/>
<dbReference type="InParanoid" id="P13804"/>
<dbReference type="OMA" id="WRPYAEQ"/>
<dbReference type="OrthoDB" id="1715808at2759"/>
<dbReference type="PAN-GO" id="P13804">
    <property type="GO annotations" value="4 GO annotations based on evolutionary models"/>
</dbReference>
<dbReference type="PhylomeDB" id="P13804"/>
<dbReference type="TreeFam" id="TF105763"/>
<dbReference type="PathwayCommons" id="P13804"/>
<dbReference type="Reactome" id="R-HSA-611105">
    <property type="pathway name" value="Respiratory electron transport"/>
</dbReference>
<dbReference type="SignaLink" id="P13804"/>
<dbReference type="SIGNOR" id="P13804"/>
<dbReference type="BioGRID-ORCS" id="2108">
    <property type="hits" value="11 hits in 1169 CRISPR screens"/>
</dbReference>
<dbReference type="CD-CODE" id="91857CE7">
    <property type="entry name" value="Nucleolus"/>
</dbReference>
<dbReference type="ChiTaRS" id="ETFA">
    <property type="organism name" value="human"/>
</dbReference>
<dbReference type="EvolutionaryTrace" id="P13804"/>
<dbReference type="GeneWiki" id="ETFA"/>
<dbReference type="GenomeRNAi" id="2108"/>
<dbReference type="Pharos" id="P13804">
    <property type="development level" value="Tbio"/>
</dbReference>
<dbReference type="PRO" id="PR:P13804"/>
<dbReference type="Proteomes" id="UP000005640">
    <property type="component" value="Chromosome 15"/>
</dbReference>
<dbReference type="RNAct" id="P13804">
    <property type="molecule type" value="protein"/>
</dbReference>
<dbReference type="Bgee" id="ENSG00000140374">
    <property type="expression patterns" value="Expressed in oocyte and 207 other cell types or tissues"/>
</dbReference>
<dbReference type="ExpressionAtlas" id="P13804">
    <property type="expression patterns" value="baseline and differential"/>
</dbReference>
<dbReference type="GO" id="GO:0045251">
    <property type="term" value="C:electron transfer flavoprotein complex"/>
    <property type="evidence" value="ECO:0000353"/>
    <property type="project" value="ComplexPortal"/>
</dbReference>
<dbReference type="GO" id="GO:0005759">
    <property type="term" value="C:mitochondrial matrix"/>
    <property type="evidence" value="ECO:0000304"/>
    <property type="project" value="Reactome"/>
</dbReference>
<dbReference type="GO" id="GO:0005739">
    <property type="term" value="C:mitochondrion"/>
    <property type="evidence" value="ECO:0000314"/>
    <property type="project" value="HPA"/>
</dbReference>
<dbReference type="GO" id="GO:0009055">
    <property type="term" value="F:electron transfer activity"/>
    <property type="evidence" value="ECO:0000314"/>
    <property type="project" value="UniProtKB"/>
</dbReference>
<dbReference type="GO" id="GO:0050660">
    <property type="term" value="F:flavin adenine dinucleotide binding"/>
    <property type="evidence" value="ECO:0000314"/>
    <property type="project" value="UniProtKB"/>
</dbReference>
<dbReference type="GO" id="GO:0016491">
    <property type="term" value="F:oxidoreductase activity"/>
    <property type="evidence" value="ECO:0000314"/>
    <property type="project" value="UniProtKB"/>
</dbReference>
<dbReference type="GO" id="GO:0009063">
    <property type="term" value="P:amino acid catabolic process"/>
    <property type="evidence" value="ECO:0000314"/>
    <property type="project" value="ComplexPortal"/>
</dbReference>
<dbReference type="GO" id="GO:0033539">
    <property type="term" value="P:fatty acid beta-oxidation using acyl-CoA dehydrogenase"/>
    <property type="evidence" value="ECO:0000314"/>
    <property type="project" value="UniProtKB"/>
</dbReference>
<dbReference type="GO" id="GO:0022904">
    <property type="term" value="P:respiratory electron transport chain"/>
    <property type="evidence" value="ECO:0000314"/>
    <property type="project" value="ComplexPortal"/>
</dbReference>
<dbReference type="CDD" id="cd01715">
    <property type="entry name" value="ETF_alpha"/>
    <property type="match status" value="1"/>
</dbReference>
<dbReference type="FunFam" id="3.40.50.620:FF:000041">
    <property type="entry name" value="Electron transfer flavoprotein alpha subunit"/>
    <property type="match status" value="1"/>
</dbReference>
<dbReference type="FunFam" id="3.40.50.1220:FF:000001">
    <property type="entry name" value="Electron transfer flavoprotein, alpha subunit"/>
    <property type="match status" value="1"/>
</dbReference>
<dbReference type="Gene3D" id="3.40.50.620">
    <property type="entry name" value="HUPs"/>
    <property type="match status" value="1"/>
</dbReference>
<dbReference type="Gene3D" id="3.40.50.1220">
    <property type="entry name" value="TPP-binding domain"/>
    <property type="match status" value="1"/>
</dbReference>
<dbReference type="InterPro" id="IPR029035">
    <property type="entry name" value="DHS-like_NAD/FAD-binding_dom"/>
</dbReference>
<dbReference type="InterPro" id="IPR014730">
    <property type="entry name" value="ETF_a/b_N"/>
</dbReference>
<dbReference type="InterPro" id="IPR001308">
    <property type="entry name" value="ETF_a/FixB"/>
</dbReference>
<dbReference type="InterPro" id="IPR033947">
    <property type="entry name" value="ETF_alpha_N"/>
</dbReference>
<dbReference type="InterPro" id="IPR014731">
    <property type="entry name" value="ETF_asu_C"/>
</dbReference>
<dbReference type="InterPro" id="IPR018206">
    <property type="entry name" value="ETF_asu_C_CS"/>
</dbReference>
<dbReference type="InterPro" id="IPR014729">
    <property type="entry name" value="Rossmann-like_a/b/a_fold"/>
</dbReference>
<dbReference type="PANTHER" id="PTHR43153">
    <property type="entry name" value="ELECTRON TRANSFER FLAVOPROTEIN ALPHA"/>
    <property type="match status" value="1"/>
</dbReference>
<dbReference type="PANTHER" id="PTHR43153:SF1">
    <property type="entry name" value="ELECTRON TRANSFER FLAVOPROTEIN SUBUNIT ALPHA, MITOCHONDRIAL"/>
    <property type="match status" value="1"/>
</dbReference>
<dbReference type="Pfam" id="PF01012">
    <property type="entry name" value="ETF"/>
    <property type="match status" value="1"/>
</dbReference>
<dbReference type="Pfam" id="PF00766">
    <property type="entry name" value="ETF_alpha"/>
    <property type="match status" value="1"/>
</dbReference>
<dbReference type="PIRSF" id="PIRSF000089">
    <property type="entry name" value="Electra_flavoP_a"/>
    <property type="match status" value="1"/>
</dbReference>
<dbReference type="SMART" id="SM00893">
    <property type="entry name" value="ETF"/>
    <property type="match status" value="1"/>
</dbReference>
<dbReference type="SUPFAM" id="SSF52402">
    <property type="entry name" value="Adenine nucleotide alpha hydrolases-like"/>
    <property type="match status" value="1"/>
</dbReference>
<dbReference type="SUPFAM" id="SSF52467">
    <property type="entry name" value="DHS-like NAD/FAD-binding domain"/>
    <property type="match status" value="1"/>
</dbReference>
<dbReference type="PROSITE" id="PS00696">
    <property type="entry name" value="ETF_ALPHA"/>
    <property type="match status" value="1"/>
</dbReference>
<proteinExistence type="evidence at protein level"/>
<accession>P13804</accession>
<accession>B4DT43</accession>
<accession>Q53XN3</accession>
<feature type="transit peptide" description="Mitochondrion" evidence="2 19">
    <location>
        <begin position="1"/>
        <end position="19"/>
    </location>
</feature>
<feature type="chain" id="PRO_0000008650" description="Electron transfer flavoprotein subunit alpha, mitochondrial">
    <location>
        <begin position="20"/>
        <end position="333"/>
    </location>
</feature>
<feature type="region of interest" description="Domain I" evidence="10">
    <location>
        <begin position="20"/>
        <end position="204"/>
    </location>
</feature>
<feature type="region of interest" description="Domain II" evidence="10">
    <location>
        <begin position="205"/>
        <end position="333"/>
    </location>
</feature>
<feature type="binding site" evidence="7 10 16 17">
    <location>
        <position position="223"/>
    </location>
    <ligand>
        <name>FAD</name>
        <dbReference type="ChEBI" id="CHEBI:57692"/>
    </ligand>
</feature>
<feature type="binding site" evidence="7 10 16 17">
    <location>
        <position position="248"/>
    </location>
    <ligand>
        <name>FAD</name>
        <dbReference type="ChEBI" id="CHEBI:57692"/>
    </ligand>
</feature>
<feature type="binding site" evidence="7 10 16 17">
    <location>
        <begin position="263"/>
        <end position="266"/>
    </location>
    <ligand>
        <name>FAD</name>
        <dbReference type="ChEBI" id="CHEBI:57692"/>
    </ligand>
</feature>
<feature type="binding site" evidence="7 10 16 17">
    <location>
        <begin position="281"/>
        <end position="286"/>
    </location>
    <ligand>
        <name>FAD</name>
        <dbReference type="ChEBI" id="CHEBI:57692"/>
    </ligand>
</feature>
<feature type="binding site" evidence="7 10 16 17">
    <location>
        <position position="300"/>
    </location>
    <ligand>
        <name>FAD</name>
        <dbReference type="ChEBI" id="CHEBI:57692"/>
    </ligand>
</feature>
<feature type="binding site" evidence="7 10 16 17">
    <location>
        <begin position="318"/>
        <end position="319"/>
    </location>
    <ligand>
        <name>FAD</name>
        <dbReference type="ChEBI" id="CHEBI:57692"/>
    </ligand>
</feature>
<feature type="modified residue" description="N6-acetyllysine; alternate" evidence="1">
    <location>
        <position position="59"/>
    </location>
</feature>
<feature type="modified residue" description="N6-succinyllysine; alternate" evidence="1">
    <location>
        <position position="59"/>
    </location>
</feature>
<feature type="modified residue" description="N6-acetyllysine" evidence="1">
    <location>
        <position position="62"/>
    </location>
</feature>
<feature type="modified residue" description="N6-acetyllysine; alternate" evidence="1">
    <location>
        <position position="69"/>
    </location>
</feature>
<feature type="modified residue" description="N6-succinyllysine; alternate" evidence="1">
    <location>
        <position position="69"/>
    </location>
</feature>
<feature type="modified residue" description="N6-acetyllysine" evidence="1">
    <location>
        <position position="75"/>
    </location>
</feature>
<feature type="modified residue" description="N6-acetyllysine; alternate" evidence="1">
    <location>
        <position position="85"/>
    </location>
</feature>
<feature type="modified residue" description="N6-succinyllysine; alternate" evidence="1">
    <location>
        <position position="85"/>
    </location>
</feature>
<feature type="modified residue" description="Phosphothreonine" evidence="1">
    <location>
        <position position="93"/>
    </location>
</feature>
<feature type="modified residue" description="N6-acetyllysine" evidence="1">
    <location>
        <position position="101"/>
    </location>
</feature>
<feature type="modified residue" description="N6-acetyllysine" evidence="1">
    <location>
        <position position="139"/>
    </location>
</feature>
<feature type="modified residue" description="Phosphoserine" evidence="18">
    <location>
        <position position="140"/>
    </location>
</feature>
<feature type="modified residue" description="N6-acetyllysine; alternate" evidence="1">
    <location>
        <position position="158"/>
    </location>
</feature>
<feature type="modified residue" description="N6-succinyllysine; alternate" evidence="1">
    <location>
        <position position="158"/>
    </location>
</feature>
<feature type="modified residue" description="N6-acetyllysine" evidence="1">
    <location>
        <position position="164"/>
    </location>
</feature>
<feature type="modified residue" description="N6-succinyllysine" evidence="1">
    <location>
        <position position="187"/>
    </location>
</feature>
<feature type="modified residue" description="N6-acetyllysine; alternate" evidence="1">
    <location>
        <position position="203"/>
    </location>
</feature>
<feature type="modified residue" description="N6-succinyllysine; alternate" evidence="1">
    <location>
        <position position="203"/>
    </location>
</feature>
<feature type="modified residue" description="N6-succinyllysine" evidence="1">
    <location>
        <position position="216"/>
    </location>
</feature>
<feature type="modified residue" description="N6-acetyllysine; alternate" evidence="1">
    <location>
        <position position="226"/>
    </location>
</feature>
<feature type="modified residue" description="N6-succinyllysine; alternate" evidence="1">
    <location>
        <position position="226"/>
    </location>
</feature>
<feature type="modified residue" description="N6-acetyllysine; alternate" evidence="1">
    <location>
        <position position="232"/>
    </location>
</feature>
<feature type="modified residue" description="N6-succinyllysine; alternate" evidence="1">
    <location>
        <position position="232"/>
    </location>
</feature>
<feature type="modified residue" description="N6-succinyllysine" evidence="1">
    <location>
        <position position="301"/>
    </location>
</feature>
<feature type="splice variant" id="VSP_043246" description="In isoform 2." evidence="12">
    <location>
        <begin position="14"/>
        <end position="62"/>
    </location>
</feature>
<feature type="sequence variant" id="VAR_002366" description="In GA2A; impaired protein stability and loss of electron transfer activity; dbSNP:rs119458971." evidence="5 11">
    <original>G</original>
    <variation>R</variation>
    <location>
        <position position="116"/>
    </location>
</feature>
<feature type="sequence variant" id="VAR_002367" description="In GA2A; dbSNP:rs119458969." evidence="8">
    <original>V</original>
    <variation>G</variation>
    <location>
        <position position="157"/>
    </location>
</feature>
<feature type="sequence variant" id="VAR_008547" description="Decreased protein stability; dbSNP:rs1801591." evidence="3">
    <original>T</original>
    <variation>I</variation>
    <location>
        <position position="171"/>
    </location>
</feature>
<feature type="sequence variant" id="VAR_002368" description="In GA2A; decreased electron transfer activity; dbSNP:rs119458970." evidence="4 5">
    <original>T</original>
    <variation>M</variation>
    <location>
        <position position="266"/>
    </location>
</feature>
<feature type="mutagenesis site" description="Loss of electron transfer activity." evidence="7">
    <original>R</original>
    <variation>A</variation>
    <location>
        <position position="249"/>
    </location>
</feature>
<feature type="strand" evidence="20">
    <location>
        <begin position="21"/>
        <end position="25"/>
    </location>
</feature>
<feature type="strand" evidence="21">
    <location>
        <begin position="28"/>
        <end position="31"/>
    </location>
</feature>
<feature type="helix" evidence="20">
    <location>
        <begin position="36"/>
        <end position="45"/>
    </location>
</feature>
<feature type="strand" evidence="20">
    <location>
        <begin position="49"/>
        <end position="58"/>
    </location>
</feature>
<feature type="helix" evidence="20">
    <location>
        <begin position="61"/>
        <end position="69"/>
    </location>
</feature>
<feature type="strand" evidence="20">
    <location>
        <begin position="75"/>
        <end position="80"/>
    </location>
</feature>
<feature type="helix" evidence="20">
    <location>
        <begin position="82"/>
        <end position="84"/>
    </location>
</feature>
<feature type="helix" evidence="20">
    <location>
        <begin position="89"/>
        <end position="103"/>
    </location>
</feature>
<feature type="strand" evidence="20">
    <location>
        <begin position="106"/>
        <end position="113"/>
    </location>
</feature>
<feature type="helix" evidence="20">
    <location>
        <begin position="114"/>
        <end position="127"/>
    </location>
</feature>
<feature type="strand" evidence="20">
    <location>
        <begin position="132"/>
        <end position="135"/>
    </location>
</feature>
<feature type="strand" evidence="20">
    <location>
        <begin position="137"/>
        <end position="140"/>
    </location>
</feature>
<feature type="strand" evidence="20">
    <location>
        <begin position="143"/>
        <end position="148"/>
    </location>
</feature>
<feature type="turn" evidence="20">
    <location>
        <begin position="149"/>
        <end position="152"/>
    </location>
</feature>
<feature type="strand" evidence="20">
    <location>
        <begin position="153"/>
        <end position="159"/>
    </location>
</feature>
<feature type="strand" evidence="20">
    <location>
        <begin position="162"/>
        <end position="168"/>
    </location>
</feature>
<feature type="helix" evidence="20">
    <location>
        <begin position="170"/>
        <end position="172"/>
    </location>
</feature>
<feature type="strand" evidence="20">
    <location>
        <begin position="178"/>
        <end position="180"/>
    </location>
</feature>
<feature type="strand" evidence="20">
    <location>
        <begin position="184"/>
        <end position="187"/>
    </location>
</feature>
<feature type="strand" evidence="20">
    <location>
        <begin position="196"/>
        <end position="204"/>
    </location>
</feature>
<feature type="helix" evidence="20">
    <location>
        <begin position="212"/>
        <end position="214"/>
    </location>
</feature>
<feature type="strand" evidence="20">
    <location>
        <begin position="216"/>
        <end position="221"/>
    </location>
</feature>
<feature type="helix" evidence="20">
    <location>
        <begin position="223"/>
        <end position="225"/>
    </location>
</feature>
<feature type="helix" evidence="20">
    <location>
        <begin position="229"/>
        <end position="231"/>
    </location>
</feature>
<feature type="helix" evidence="20">
    <location>
        <begin position="232"/>
        <end position="241"/>
    </location>
</feature>
<feature type="strand" evidence="20">
    <location>
        <begin position="244"/>
        <end position="247"/>
    </location>
</feature>
<feature type="helix" evidence="20">
    <location>
        <begin position="249"/>
        <end position="253"/>
    </location>
</feature>
<feature type="helix" evidence="20">
    <location>
        <begin position="259"/>
        <end position="261"/>
    </location>
</feature>
<feature type="strand" evidence="20">
    <location>
        <begin position="262"/>
        <end position="264"/>
    </location>
</feature>
<feature type="strand" evidence="20">
    <location>
        <begin position="273"/>
        <end position="279"/>
    </location>
</feature>
<feature type="helix" evidence="20">
    <location>
        <begin position="284"/>
        <end position="287"/>
    </location>
</feature>
<feature type="turn" evidence="20">
    <location>
        <begin position="288"/>
        <end position="292"/>
    </location>
</feature>
<feature type="strand" evidence="20">
    <location>
        <begin position="294"/>
        <end position="301"/>
    </location>
</feature>
<feature type="helix" evidence="20">
    <location>
        <begin position="306"/>
        <end position="309"/>
    </location>
</feature>
<feature type="strand" evidence="20">
    <location>
        <begin position="312"/>
        <end position="317"/>
    </location>
</feature>
<feature type="helix" evidence="20">
    <location>
        <begin position="319"/>
        <end position="329"/>
    </location>
</feature>
<gene>
    <name type="primary">ETFA</name>
</gene>
<protein>
    <recommendedName>
        <fullName>Electron transfer flavoprotein subunit alpha, mitochondrial</fullName>
        <shortName>Alpha-ETF</shortName>
    </recommendedName>
</protein>
<keyword id="KW-0002">3D-structure</keyword>
<keyword id="KW-0007">Acetylation</keyword>
<keyword id="KW-0025">Alternative splicing</keyword>
<keyword id="KW-0903">Direct protein sequencing</keyword>
<keyword id="KW-0225">Disease variant</keyword>
<keyword id="KW-0249">Electron transport</keyword>
<keyword id="KW-0274">FAD</keyword>
<keyword id="KW-0285">Flavoprotein</keyword>
<keyword id="KW-0316">Glutaricaciduria</keyword>
<keyword id="KW-0496">Mitochondrion</keyword>
<keyword id="KW-0597">Phosphoprotein</keyword>
<keyword id="KW-1267">Proteomics identification</keyword>
<keyword id="KW-1185">Reference proteome</keyword>
<keyword id="KW-0809">Transit peptide</keyword>
<keyword id="KW-0813">Transport</keyword>